<reference key="1">
    <citation type="journal article" date="2004" name="Proc. Natl. Acad. Sci. U.S.A.">
        <title>Complete genomes of two clinical Staphylococcus aureus strains: evidence for the rapid evolution of virulence and drug resistance.</title>
        <authorList>
            <person name="Holden M.T.G."/>
            <person name="Feil E.J."/>
            <person name="Lindsay J.A."/>
            <person name="Peacock S.J."/>
            <person name="Day N.P.J."/>
            <person name="Enright M.C."/>
            <person name="Foster T.J."/>
            <person name="Moore C.E."/>
            <person name="Hurst L."/>
            <person name="Atkin R."/>
            <person name="Barron A."/>
            <person name="Bason N."/>
            <person name="Bentley S.D."/>
            <person name="Chillingworth C."/>
            <person name="Chillingworth T."/>
            <person name="Churcher C."/>
            <person name="Clark L."/>
            <person name="Corton C."/>
            <person name="Cronin A."/>
            <person name="Doggett J."/>
            <person name="Dowd L."/>
            <person name="Feltwell T."/>
            <person name="Hance Z."/>
            <person name="Harris B."/>
            <person name="Hauser H."/>
            <person name="Holroyd S."/>
            <person name="Jagels K."/>
            <person name="James K.D."/>
            <person name="Lennard N."/>
            <person name="Line A."/>
            <person name="Mayes R."/>
            <person name="Moule S."/>
            <person name="Mungall K."/>
            <person name="Ormond D."/>
            <person name="Quail M.A."/>
            <person name="Rabbinowitsch E."/>
            <person name="Rutherford K.M."/>
            <person name="Sanders M."/>
            <person name="Sharp S."/>
            <person name="Simmonds M."/>
            <person name="Stevens K."/>
            <person name="Whitehead S."/>
            <person name="Barrell B.G."/>
            <person name="Spratt B.G."/>
            <person name="Parkhill J."/>
        </authorList>
    </citation>
    <scope>NUCLEOTIDE SEQUENCE [LARGE SCALE GENOMIC DNA]</scope>
    <source>
        <strain>MRSA252</strain>
    </source>
</reference>
<organism>
    <name type="scientific">Staphylococcus aureus (strain MRSA252)</name>
    <dbReference type="NCBI Taxonomy" id="282458"/>
    <lineage>
        <taxon>Bacteria</taxon>
        <taxon>Bacillati</taxon>
        <taxon>Bacillota</taxon>
        <taxon>Bacilli</taxon>
        <taxon>Bacillales</taxon>
        <taxon>Staphylococcaceae</taxon>
        <taxon>Staphylococcus</taxon>
    </lineage>
</organism>
<dbReference type="EC" id="1.2.4.1"/>
<dbReference type="EMBL" id="BX571856">
    <property type="protein sequence ID" value="CAG40069.1"/>
    <property type="molecule type" value="Genomic_DNA"/>
</dbReference>
<dbReference type="RefSeq" id="WP_000035325.1">
    <property type="nucleotide sequence ID" value="NC_002952.2"/>
</dbReference>
<dbReference type="SMR" id="Q6GHZ2"/>
<dbReference type="KEGG" id="sar:SAR1067"/>
<dbReference type="HOGENOM" id="CLU_029393_1_0_9"/>
<dbReference type="Proteomes" id="UP000000596">
    <property type="component" value="Chromosome"/>
</dbReference>
<dbReference type="GO" id="GO:0004739">
    <property type="term" value="F:pyruvate dehydrogenase (acetyl-transferring) activity"/>
    <property type="evidence" value="ECO:0007669"/>
    <property type="project" value="UniProtKB-EC"/>
</dbReference>
<dbReference type="GO" id="GO:0009083">
    <property type="term" value="P:branched-chain amino acid catabolic process"/>
    <property type="evidence" value="ECO:0007669"/>
    <property type="project" value="TreeGrafter"/>
</dbReference>
<dbReference type="CDD" id="cd02000">
    <property type="entry name" value="TPP_E1_PDC_ADC_BCADC"/>
    <property type="match status" value="1"/>
</dbReference>
<dbReference type="FunFam" id="3.40.50.970:FF:000023">
    <property type="entry name" value="Pyruvate dehydrogenase E1 component subunit alpha"/>
    <property type="match status" value="1"/>
</dbReference>
<dbReference type="Gene3D" id="3.40.50.970">
    <property type="match status" value="1"/>
</dbReference>
<dbReference type="InterPro" id="IPR050771">
    <property type="entry name" value="Alpha-ketoacid_DH_E1_comp"/>
</dbReference>
<dbReference type="InterPro" id="IPR001017">
    <property type="entry name" value="DH_E1"/>
</dbReference>
<dbReference type="InterPro" id="IPR017596">
    <property type="entry name" value="PdhA/BkdA"/>
</dbReference>
<dbReference type="InterPro" id="IPR029061">
    <property type="entry name" value="THDP-binding"/>
</dbReference>
<dbReference type="NCBIfam" id="TIGR03181">
    <property type="entry name" value="PDH_E1_alph_x"/>
    <property type="match status" value="1"/>
</dbReference>
<dbReference type="PANTHER" id="PTHR43380">
    <property type="entry name" value="2-OXOISOVALERATE DEHYDROGENASE SUBUNIT ALPHA, MITOCHONDRIAL"/>
    <property type="match status" value="1"/>
</dbReference>
<dbReference type="PANTHER" id="PTHR43380:SF1">
    <property type="entry name" value="2-OXOISOVALERATE DEHYDROGENASE SUBUNIT ALPHA, MITOCHONDRIAL"/>
    <property type="match status" value="1"/>
</dbReference>
<dbReference type="Pfam" id="PF00676">
    <property type="entry name" value="E1_dh"/>
    <property type="match status" value="1"/>
</dbReference>
<dbReference type="SUPFAM" id="SSF52518">
    <property type="entry name" value="Thiamin diphosphate-binding fold (THDP-binding)"/>
    <property type="match status" value="1"/>
</dbReference>
<gene>
    <name type="primary">pdhA</name>
    <name type="ordered locus">SAR1067</name>
</gene>
<accession>Q6GHZ2</accession>
<protein>
    <recommendedName>
        <fullName>Pyruvate dehydrogenase E1 component subunit alpha</fullName>
        <ecNumber>1.2.4.1</ecNumber>
    </recommendedName>
</protein>
<proteinExistence type="inferred from homology"/>
<evidence type="ECO:0000250" key="1"/>
<sequence>MAPKLQAQFDAVKVLNDTQSKFEMVQILDENGNVVNEDLVPDLTDEQLVELMERMVWTRILDQRSISLNRQGRLGFYAPTAGQEASQLASQYALEKEDYILPGYRDVPQIIWHGLPLTEAFLFSRGHFKGNQFPEGVNALSPQIIIGAQYIQTAGVAFALKKRGKNAVAITYTGDGGSSQGDFYEGINFAAAYKAPAIFVIQNNNYAISTPRSKQTAAETLAQKAIAVGIPGIQVDGMDALAVYQATKEARDRAVAGEGPTLIETMTYRYGPHTMAGDDPTRYRTSDEDAEWEKKDPLVRFRKFLENKGLWNEDKENEVIERAKADIKAAIKEADNTEKQTVTSLMEIMYEDMPQNLAEQYEIYKEKESK</sequence>
<keyword id="KW-0560">Oxidoreductase</keyword>
<keyword id="KW-0670">Pyruvate</keyword>
<keyword id="KW-0786">Thiamine pyrophosphate</keyword>
<feature type="chain" id="PRO_0000162208" description="Pyruvate dehydrogenase E1 component subunit alpha">
    <location>
        <begin position="1"/>
        <end position="370"/>
    </location>
</feature>
<name>ODPA_STAAR</name>
<comment type="function">
    <text evidence="1">The pyruvate dehydrogenase complex catalyzes the overall conversion of pyruvate to acetyl-CoA and CO(2). It contains multiple copies of three enzymatic components: pyruvate dehydrogenase (E1), dihydrolipoamide acetyltransferase (E2) and lipoamide dehydrogenase (E3) (By similarity).</text>
</comment>
<comment type="catalytic activity">
    <reaction>
        <text>N(6)-[(R)-lipoyl]-L-lysyl-[protein] + pyruvate + H(+) = N(6)-[(R)-S(8)-acetyldihydrolipoyl]-L-lysyl-[protein] + CO2</text>
        <dbReference type="Rhea" id="RHEA:19189"/>
        <dbReference type="Rhea" id="RHEA-COMP:10474"/>
        <dbReference type="Rhea" id="RHEA-COMP:10478"/>
        <dbReference type="ChEBI" id="CHEBI:15361"/>
        <dbReference type="ChEBI" id="CHEBI:15378"/>
        <dbReference type="ChEBI" id="CHEBI:16526"/>
        <dbReference type="ChEBI" id="CHEBI:83099"/>
        <dbReference type="ChEBI" id="CHEBI:83111"/>
        <dbReference type="EC" id="1.2.4.1"/>
    </reaction>
</comment>
<comment type="cofactor">
    <cofactor evidence="1">
        <name>thiamine diphosphate</name>
        <dbReference type="ChEBI" id="CHEBI:58937"/>
    </cofactor>
</comment>
<comment type="subunit">
    <text>Heterodimer of an alpha and a beta chain.</text>
</comment>